<comment type="function">
    <text evidence="1">Involved in transcription antitermination. Required for transcription of ribosomal RNA (rRNA) genes. Binds specifically to the boxA antiterminator sequence of the ribosomal RNA (rrn) operons.</text>
</comment>
<comment type="similarity">
    <text evidence="1">Belongs to the NusB family.</text>
</comment>
<gene>
    <name evidence="1" type="primary">nusB</name>
    <name type="ordered locus">Csac_2123</name>
</gene>
<reference key="1">
    <citation type="submission" date="2007-04" db="EMBL/GenBank/DDBJ databases">
        <title>Genome sequence of the thermophilic hydrogen-producing bacterium Caldicellulosiruptor saccharolyticus DSM 8903.</title>
        <authorList>
            <person name="Copeland A."/>
            <person name="Lucas S."/>
            <person name="Lapidus A."/>
            <person name="Barry K."/>
            <person name="Detter J.C."/>
            <person name="Glavina del Rio T."/>
            <person name="Hammon N."/>
            <person name="Israni S."/>
            <person name="Dalin E."/>
            <person name="Tice H."/>
            <person name="Pitluck S."/>
            <person name="Kiss H."/>
            <person name="Brettin T."/>
            <person name="Bruce D."/>
            <person name="Han C."/>
            <person name="Schmutz J."/>
            <person name="Larimer F."/>
            <person name="Land M."/>
            <person name="Hauser L."/>
            <person name="Kyrpides N."/>
            <person name="Lykidis A."/>
            <person name="van de Werken H.J.G."/>
            <person name="Verhaart M.R.A."/>
            <person name="VanFossen A.L."/>
            <person name="Lewis D.L."/>
            <person name="Nichols J.D."/>
            <person name="Goorissen H.P."/>
            <person name="van Niel E.W.J."/>
            <person name="Stams F.J.M."/>
            <person name="Willquist K.U."/>
            <person name="Ward D.E."/>
            <person name="van der Oost J."/>
            <person name="Kelly R.M."/>
            <person name="Kengen S.M.W."/>
            <person name="Richardson P."/>
        </authorList>
    </citation>
    <scope>NUCLEOTIDE SEQUENCE [LARGE SCALE GENOMIC DNA]</scope>
    <source>
        <strain>ATCC 43494 / DSM 8903 / Tp8T 6331</strain>
    </source>
</reference>
<sequence length="131" mass="15363">MKILYAYRFQNNEYDIIEFLNKFKELNPDENFKEIDEEYLKKLLTGVIRNQQLIDNLIEKYSKDWPLSRIPMVELELMRIAIYELLFEEEIPISVAIDEAVDLSSIFGVEKAPSFVNGILGSIAVNEVKRE</sequence>
<name>NUSB_CALS8</name>
<keyword id="KW-0694">RNA-binding</keyword>
<keyword id="KW-0804">Transcription</keyword>
<keyword id="KW-0889">Transcription antitermination</keyword>
<keyword id="KW-0805">Transcription regulation</keyword>
<accession>A4XLC1</accession>
<feature type="chain" id="PRO_1000192421" description="Transcription antitermination protein NusB">
    <location>
        <begin position="1"/>
        <end position="131"/>
    </location>
</feature>
<evidence type="ECO:0000255" key="1">
    <source>
        <dbReference type="HAMAP-Rule" id="MF_00073"/>
    </source>
</evidence>
<proteinExistence type="inferred from homology"/>
<organism>
    <name type="scientific">Caldicellulosiruptor saccharolyticus (strain ATCC 43494 / DSM 8903 / Tp8T 6331)</name>
    <dbReference type="NCBI Taxonomy" id="351627"/>
    <lineage>
        <taxon>Bacteria</taxon>
        <taxon>Bacillati</taxon>
        <taxon>Bacillota</taxon>
        <taxon>Bacillota incertae sedis</taxon>
        <taxon>Caldicellulosiruptorales</taxon>
        <taxon>Caldicellulosiruptoraceae</taxon>
        <taxon>Caldicellulosiruptor</taxon>
    </lineage>
</organism>
<dbReference type="EMBL" id="CP000679">
    <property type="protein sequence ID" value="ABP67706.2"/>
    <property type="molecule type" value="Genomic_DNA"/>
</dbReference>
<dbReference type="RefSeq" id="WP_011917637.1">
    <property type="nucleotide sequence ID" value="NC_009437.1"/>
</dbReference>
<dbReference type="SMR" id="A4XLC1"/>
<dbReference type="STRING" id="351627.Csac_2123"/>
<dbReference type="KEGG" id="csc:Csac_2123"/>
<dbReference type="eggNOG" id="COG0781">
    <property type="taxonomic scope" value="Bacteria"/>
</dbReference>
<dbReference type="HOGENOM" id="CLU_087843_3_3_9"/>
<dbReference type="Proteomes" id="UP000000256">
    <property type="component" value="Chromosome"/>
</dbReference>
<dbReference type="GO" id="GO:0005829">
    <property type="term" value="C:cytosol"/>
    <property type="evidence" value="ECO:0007669"/>
    <property type="project" value="TreeGrafter"/>
</dbReference>
<dbReference type="GO" id="GO:0003723">
    <property type="term" value="F:RNA binding"/>
    <property type="evidence" value="ECO:0007669"/>
    <property type="project" value="UniProtKB-UniRule"/>
</dbReference>
<dbReference type="GO" id="GO:0006353">
    <property type="term" value="P:DNA-templated transcription termination"/>
    <property type="evidence" value="ECO:0007669"/>
    <property type="project" value="UniProtKB-UniRule"/>
</dbReference>
<dbReference type="GO" id="GO:0031564">
    <property type="term" value="P:transcription antitermination"/>
    <property type="evidence" value="ECO:0007669"/>
    <property type="project" value="UniProtKB-KW"/>
</dbReference>
<dbReference type="Gene3D" id="1.10.940.10">
    <property type="entry name" value="NusB-like"/>
    <property type="match status" value="1"/>
</dbReference>
<dbReference type="HAMAP" id="MF_00073">
    <property type="entry name" value="NusB"/>
    <property type="match status" value="1"/>
</dbReference>
<dbReference type="InterPro" id="IPR035926">
    <property type="entry name" value="NusB-like_sf"/>
</dbReference>
<dbReference type="InterPro" id="IPR011605">
    <property type="entry name" value="NusB_fam"/>
</dbReference>
<dbReference type="InterPro" id="IPR006027">
    <property type="entry name" value="NusB_RsmB_TIM44"/>
</dbReference>
<dbReference type="NCBIfam" id="TIGR01951">
    <property type="entry name" value="nusB"/>
    <property type="match status" value="1"/>
</dbReference>
<dbReference type="PANTHER" id="PTHR11078:SF3">
    <property type="entry name" value="ANTITERMINATION NUSB DOMAIN-CONTAINING PROTEIN"/>
    <property type="match status" value="1"/>
</dbReference>
<dbReference type="PANTHER" id="PTHR11078">
    <property type="entry name" value="N UTILIZATION SUBSTANCE PROTEIN B-RELATED"/>
    <property type="match status" value="1"/>
</dbReference>
<dbReference type="Pfam" id="PF01029">
    <property type="entry name" value="NusB"/>
    <property type="match status" value="1"/>
</dbReference>
<dbReference type="SUPFAM" id="SSF48013">
    <property type="entry name" value="NusB-like"/>
    <property type="match status" value="1"/>
</dbReference>
<protein>
    <recommendedName>
        <fullName evidence="1">Transcription antitermination protein NusB</fullName>
    </recommendedName>
    <alternativeName>
        <fullName evidence="1">Antitermination factor NusB</fullName>
    </alternativeName>
</protein>